<organism>
    <name type="scientific">Methanopyrus kandleri (strain AV19 / DSM 6324 / JCM 9639 / NBRC 100938)</name>
    <dbReference type="NCBI Taxonomy" id="190192"/>
    <lineage>
        <taxon>Archaea</taxon>
        <taxon>Methanobacteriati</taxon>
        <taxon>Methanobacteriota</taxon>
        <taxon>Methanomada group</taxon>
        <taxon>Methanopyri</taxon>
        <taxon>Methanopyrales</taxon>
        <taxon>Methanopyraceae</taxon>
        <taxon>Methanopyrus</taxon>
    </lineage>
</organism>
<gene>
    <name evidence="1" type="primary">rps24e</name>
    <name type="ordered locus">MK1454</name>
</gene>
<feature type="chain" id="PRO_0000137644" description="Small ribosomal subunit protein eS24">
    <location>
        <begin position="1"/>
        <end position="116"/>
    </location>
</feature>
<feature type="region of interest" description="Disordered" evidence="2">
    <location>
        <begin position="81"/>
        <end position="116"/>
    </location>
</feature>
<feature type="compositionally biased region" description="Acidic residues" evidence="2">
    <location>
        <begin position="96"/>
        <end position="116"/>
    </location>
</feature>
<dbReference type="EMBL" id="AE009439">
    <property type="protein sequence ID" value="AAM02667.1"/>
    <property type="molecule type" value="Genomic_DNA"/>
</dbReference>
<dbReference type="SMR" id="Q8TVD8"/>
<dbReference type="FunCoup" id="Q8TVD8">
    <property type="interactions" value="59"/>
</dbReference>
<dbReference type="STRING" id="190192.MK1454"/>
<dbReference type="PaxDb" id="190192-MK1454"/>
<dbReference type="EnsemblBacteria" id="AAM02667">
    <property type="protein sequence ID" value="AAM02667"/>
    <property type="gene ID" value="MK1454"/>
</dbReference>
<dbReference type="KEGG" id="mka:MK1454"/>
<dbReference type="HOGENOM" id="CLU_107248_3_1_2"/>
<dbReference type="InParanoid" id="Q8TVD8"/>
<dbReference type="OrthoDB" id="27533at2157"/>
<dbReference type="Proteomes" id="UP000001826">
    <property type="component" value="Chromosome"/>
</dbReference>
<dbReference type="GO" id="GO:1990904">
    <property type="term" value="C:ribonucleoprotein complex"/>
    <property type="evidence" value="ECO:0007669"/>
    <property type="project" value="UniProtKB-KW"/>
</dbReference>
<dbReference type="GO" id="GO:0005840">
    <property type="term" value="C:ribosome"/>
    <property type="evidence" value="ECO:0007669"/>
    <property type="project" value="UniProtKB-KW"/>
</dbReference>
<dbReference type="GO" id="GO:0003735">
    <property type="term" value="F:structural constituent of ribosome"/>
    <property type="evidence" value="ECO:0007669"/>
    <property type="project" value="InterPro"/>
</dbReference>
<dbReference type="GO" id="GO:0006412">
    <property type="term" value="P:translation"/>
    <property type="evidence" value="ECO:0007669"/>
    <property type="project" value="UniProtKB-UniRule"/>
</dbReference>
<dbReference type="Gene3D" id="3.30.70.3370">
    <property type="match status" value="1"/>
</dbReference>
<dbReference type="HAMAP" id="MF_00545">
    <property type="entry name" value="Ribosomal_eS24"/>
    <property type="match status" value="1"/>
</dbReference>
<dbReference type="InterPro" id="IPR053709">
    <property type="entry name" value="eRP_eS24_sf"/>
</dbReference>
<dbReference type="InterPro" id="IPR001976">
    <property type="entry name" value="Ribosomal_eS24"/>
</dbReference>
<dbReference type="InterPro" id="IPR018098">
    <property type="entry name" value="Ribosomal_eS24_CS"/>
</dbReference>
<dbReference type="InterPro" id="IPR012678">
    <property type="entry name" value="Ribosomal_uL23/eL15/eS24_sf"/>
</dbReference>
<dbReference type="PANTHER" id="PTHR10496">
    <property type="entry name" value="40S RIBOSOMAL PROTEIN S24"/>
    <property type="match status" value="1"/>
</dbReference>
<dbReference type="Pfam" id="PF01282">
    <property type="entry name" value="Ribosomal_S24e"/>
    <property type="match status" value="1"/>
</dbReference>
<dbReference type="SUPFAM" id="SSF54189">
    <property type="entry name" value="Ribosomal proteins S24e, L23 and L15e"/>
    <property type="match status" value="1"/>
</dbReference>
<dbReference type="PROSITE" id="PS00529">
    <property type="entry name" value="RIBOSOMAL_S24E"/>
    <property type="match status" value="1"/>
</dbReference>
<name>RS24_METKA</name>
<comment type="similarity">
    <text evidence="1">Belongs to the eukaryotic ribosomal protein eS24 family.</text>
</comment>
<proteinExistence type="inferred from homology"/>
<reference key="1">
    <citation type="journal article" date="2002" name="Proc. Natl. Acad. Sci. U.S.A.">
        <title>The complete genome of hyperthermophile Methanopyrus kandleri AV19 and monophyly of archaeal methanogens.</title>
        <authorList>
            <person name="Slesarev A.I."/>
            <person name="Mezhevaya K.V."/>
            <person name="Makarova K.S."/>
            <person name="Polushin N.N."/>
            <person name="Shcherbinina O.V."/>
            <person name="Shakhova V.V."/>
            <person name="Belova G.I."/>
            <person name="Aravind L."/>
            <person name="Natale D.A."/>
            <person name="Rogozin I.B."/>
            <person name="Tatusov R.L."/>
            <person name="Wolf Y.I."/>
            <person name="Stetter K.O."/>
            <person name="Malykh A.G."/>
            <person name="Koonin E.V."/>
            <person name="Kozyavkin S.A."/>
        </authorList>
    </citation>
    <scope>NUCLEOTIDE SEQUENCE [LARGE SCALE GENOMIC DNA]</scope>
    <source>
        <strain>AV19 / DSM 6324 / JCM 9639 / NBRC 100938</strain>
    </source>
</reference>
<sequence>MEVEILDQRDNPLLYRKEVKFVVRHEDSGTPQKSEVLRKLAAILDVDKEVVLIDRMESEFGKRETKGYAKIYKSMEHLEDIEPEHMVERHKKVLEELESESEESEESESEESEEEE</sequence>
<evidence type="ECO:0000255" key="1">
    <source>
        <dbReference type="HAMAP-Rule" id="MF_00545"/>
    </source>
</evidence>
<evidence type="ECO:0000256" key="2">
    <source>
        <dbReference type="SAM" id="MobiDB-lite"/>
    </source>
</evidence>
<evidence type="ECO:0000305" key="3"/>
<protein>
    <recommendedName>
        <fullName evidence="1">Small ribosomal subunit protein eS24</fullName>
    </recommendedName>
    <alternativeName>
        <fullName evidence="3">30S ribosomal protein S24e</fullName>
    </alternativeName>
</protein>
<keyword id="KW-1185">Reference proteome</keyword>
<keyword id="KW-0687">Ribonucleoprotein</keyword>
<keyword id="KW-0689">Ribosomal protein</keyword>
<accession>Q8TVD8</accession>